<gene>
    <name evidence="1" type="primary">rbcL</name>
</gene>
<evidence type="ECO:0000255" key="1">
    <source>
        <dbReference type="HAMAP-Rule" id="MF_01338"/>
    </source>
</evidence>
<proteinExistence type="inferred from homology"/>
<keyword id="KW-0113">Calvin cycle</keyword>
<keyword id="KW-0120">Carbon dioxide fixation</keyword>
<keyword id="KW-0150">Chloroplast</keyword>
<keyword id="KW-1015">Disulfide bond</keyword>
<keyword id="KW-0456">Lyase</keyword>
<keyword id="KW-0460">Magnesium</keyword>
<keyword id="KW-0479">Metal-binding</keyword>
<keyword id="KW-0488">Methylation</keyword>
<keyword id="KW-0503">Monooxygenase</keyword>
<keyword id="KW-0560">Oxidoreductase</keyword>
<keyword id="KW-0601">Photorespiration</keyword>
<keyword id="KW-0602">Photosynthesis</keyword>
<keyword id="KW-0934">Plastid</keyword>
<protein>
    <recommendedName>
        <fullName evidence="1">Ribulose bisphosphate carboxylase large chain</fullName>
        <shortName evidence="1">RuBisCO large subunit</shortName>
        <ecNumber evidence="1">4.1.1.39</ecNumber>
    </recommendedName>
</protein>
<name>RBL_IRIGE</name>
<organism>
    <name type="scientific">Iris germanica</name>
    <name type="common">Bearded iris</name>
    <name type="synonym">German iris</name>
    <dbReference type="NCBI Taxonomy" id="34205"/>
    <lineage>
        <taxon>Eukaryota</taxon>
        <taxon>Viridiplantae</taxon>
        <taxon>Streptophyta</taxon>
        <taxon>Embryophyta</taxon>
        <taxon>Tracheophyta</taxon>
        <taxon>Spermatophyta</taxon>
        <taxon>Magnoliopsida</taxon>
        <taxon>Liliopsida</taxon>
        <taxon>Asparagales</taxon>
        <taxon>Iridaceae</taxon>
        <taxon>Iridoideae</taxon>
        <taxon>Irideae</taxon>
        <taxon>Iris</taxon>
    </lineage>
</organism>
<sequence>GFKAGVKDYRLTYYTPDYETKDTDILAAFRVTPQPGVPAEEAGAAVAAESSTGTWTTVWTDGLTSLDRYKGRCYHIEAVVGEENQYIAYVAYPLDLFEEGSVTNMFTSIVGNVFGFKALRALRLEDLRIPPAYSKTFQGPPHGIQAERDKLNKYGRPLLGCTIKPKLGLSAKNYGRAVYECLRGGLDFTKDDENVNSQPFMRWRDRFLFCAEALYKAQAETGEIKGHYLNATAATCEEMMKRAIFARELGVPIVMHDYLTGGFTANTSLAHYCRDNGLLLHIHRAMHAVIDRQKNHGMHFRVLAKALRMSGGDHIHAGTVVGKLEGEREMTLGFVDLLRDDYIEKDRSRGIFFTQDWVSMPGVLPVASGGIHVWHMPALTEIFGDDSVLQFGGGTLGHPWGNAPGAVANRVALEACVQARNEGRDLAREGNEIIREACSWSPE</sequence>
<accession>Q37227</accession>
<comment type="function">
    <text evidence="1">RuBisCO catalyzes two reactions: the carboxylation of D-ribulose 1,5-bisphosphate, the primary event in carbon dioxide fixation, as well as the oxidative fragmentation of the pentose substrate in the photorespiration process. Both reactions occur simultaneously and in competition at the same active site.</text>
</comment>
<comment type="catalytic activity">
    <reaction evidence="1">
        <text>2 (2R)-3-phosphoglycerate + 2 H(+) = D-ribulose 1,5-bisphosphate + CO2 + H2O</text>
        <dbReference type="Rhea" id="RHEA:23124"/>
        <dbReference type="ChEBI" id="CHEBI:15377"/>
        <dbReference type="ChEBI" id="CHEBI:15378"/>
        <dbReference type="ChEBI" id="CHEBI:16526"/>
        <dbReference type="ChEBI" id="CHEBI:57870"/>
        <dbReference type="ChEBI" id="CHEBI:58272"/>
        <dbReference type="EC" id="4.1.1.39"/>
    </reaction>
</comment>
<comment type="catalytic activity">
    <reaction evidence="1">
        <text>D-ribulose 1,5-bisphosphate + O2 = 2-phosphoglycolate + (2R)-3-phosphoglycerate + 2 H(+)</text>
        <dbReference type="Rhea" id="RHEA:36631"/>
        <dbReference type="ChEBI" id="CHEBI:15378"/>
        <dbReference type="ChEBI" id="CHEBI:15379"/>
        <dbReference type="ChEBI" id="CHEBI:57870"/>
        <dbReference type="ChEBI" id="CHEBI:58033"/>
        <dbReference type="ChEBI" id="CHEBI:58272"/>
    </reaction>
</comment>
<comment type="cofactor">
    <cofactor evidence="1">
        <name>Mg(2+)</name>
        <dbReference type="ChEBI" id="CHEBI:18420"/>
    </cofactor>
    <text evidence="1">Binds 1 Mg(2+) ion per subunit.</text>
</comment>
<comment type="subunit">
    <text evidence="1">Heterohexadecamer of 8 large chains and 8 small chains; disulfide-linked. The disulfide link is formed within the large subunit homodimers.</text>
</comment>
<comment type="subcellular location">
    <subcellularLocation>
        <location>Plastid</location>
        <location>Chloroplast</location>
    </subcellularLocation>
</comment>
<comment type="PTM">
    <text evidence="1">The disulfide bond which can form in the large chain dimeric partners within the hexadecamer appears to be associated with oxidative stress and protein turnover.</text>
</comment>
<comment type="miscellaneous">
    <text evidence="1">The basic functional RuBisCO is composed of a large chain homodimer in a 'head-to-tail' conformation. In form I RuBisCO this homodimer is arranged in a barrel-like tetramer with the small subunits forming a tetrameric 'cap' on each end of the 'barrel'.</text>
</comment>
<comment type="similarity">
    <text evidence="1">Belongs to the RuBisCO large chain family. Type I subfamily.</text>
</comment>
<feature type="chain" id="PRO_0000062497" description="Ribulose bisphosphate carboxylase large chain">
    <location>
        <begin position="1" status="less than"/>
        <end position="443" status="greater than"/>
    </location>
</feature>
<feature type="active site" description="Proton acceptor" evidence="1">
    <location>
        <position position="164"/>
    </location>
</feature>
<feature type="active site" description="Proton acceptor" evidence="1">
    <location>
        <position position="283"/>
    </location>
</feature>
<feature type="binding site" description="in homodimeric partner" evidence="1">
    <location>
        <position position="112"/>
    </location>
    <ligand>
        <name>substrate</name>
    </ligand>
</feature>
<feature type="binding site" evidence="1">
    <location>
        <position position="162"/>
    </location>
    <ligand>
        <name>substrate</name>
    </ligand>
</feature>
<feature type="binding site" evidence="1">
    <location>
        <position position="166"/>
    </location>
    <ligand>
        <name>substrate</name>
    </ligand>
</feature>
<feature type="binding site" description="via carbamate group" evidence="1">
    <location>
        <position position="190"/>
    </location>
    <ligand>
        <name>Mg(2+)</name>
        <dbReference type="ChEBI" id="CHEBI:18420"/>
    </ligand>
</feature>
<feature type="binding site" evidence="1">
    <location>
        <position position="192"/>
    </location>
    <ligand>
        <name>Mg(2+)</name>
        <dbReference type="ChEBI" id="CHEBI:18420"/>
    </ligand>
</feature>
<feature type="binding site" evidence="1">
    <location>
        <position position="193"/>
    </location>
    <ligand>
        <name>Mg(2+)</name>
        <dbReference type="ChEBI" id="CHEBI:18420"/>
    </ligand>
</feature>
<feature type="binding site" evidence="1">
    <location>
        <position position="284"/>
    </location>
    <ligand>
        <name>substrate</name>
    </ligand>
</feature>
<feature type="binding site" evidence="1">
    <location>
        <position position="316"/>
    </location>
    <ligand>
        <name>substrate</name>
    </ligand>
</feature>
<feature type="binding site" evidence="1">
    <location>
        <position position="368"/>
    </location>
    <ligand>
        <name>substrate</name>
    </ligand>
</feature>
<feature type="site" description="Transition state stabilizer" evidence="1">
    <location>
        <position position="323"/>
    </location>
</feature>
<feature type="modified residue" description="N6,N6,N6-trimethyllysine" evidence="1">
    <location>
        <position position="3"/>
    </location>
</feature>
<feature type="modified residue" description="N6-carboxylysine" evidence="1">
    <location>
        <position position="190"/>
    </location>
</feature>
<feature type="disulfide bond" description="Interchain; in linked form" evidence="1">
    <location>
        <position position="236"/>
    </location>
</feature>
<feature type="non-terminal residue">
    <location>
        <position position="1"/>
    </location>
</feature>
<feature type="non-terminal residue">
    <location>
        <position position="443"/>
    </location>
</feature>
<reference key="1">
    <citation type="submission" date="1994-05" db="EMBL/GenBank/DDBJ databases">
        <authorList>
            <person name="Duvall M.R."/>
            <person name="Chase M.W."/>
            <person name="Soltis D.E."/>
            <person name="Clegg M.T."/>
        </authorList>
    </citation>
    <scope>NUCLEOTIDE SEQUENCE [GENOMIC DNA]</scope>
    <source>
        <tissue>Leaf</tissue>
    </source>
</reference>
<geneLocation type="chloroplast"/>
<dbReference type="EC" id="4.1.1.39" evidence="1"/>
<dbReference type="EMBL" id="L05037">
    <property type="protein sequence ID" value="AAB07710.2"/>
    <property type="molecule type" value="Genomic_DNA"/>
</dbReference>
<dbReference type="SMR" id="Q37227"/>
<dbReference type="GO" id="GO:0009507">
    <property type="term" value="C:chloroplast"/>
    <property type="evidence" value="ECO:0007669"/>
    <property type="project" value="UniProtKB-SubCell"/>
</dbReference>
<dbReference type="GO" id="GO:0000287">
    <property type="term" value="F:magnesium ion binding"/>
    <property type="evidence" value="ECO:0007669"/>
    <property type="project" value="InterPro"/>
</dbReference>
<dbReference type="GO" id="GO:0004497">
    <property type="term" value="F:monooxygenase activity"/>
    <property type="evidence" value="ECO:0007669"/>
    <property type="project" value="UniProtKB-KW"/>
</dbReference>
<dbReference type="GO" id="GO:0016984">
    <property type="term" value="F:ribulose-bisphosphate carboxylase activity"/>
    <property type="evidence" value="ECO:0007669"/>
    <property type="project" value="UniProtKB-EC"/>
</dbReference>
<dbReference type="GO" id="GO:0009853">
    <property type="term" value="P:photorespiration"/>
    <property type="evidence" value="ECO:0007669"/>
    <property type="project" value="UniProtKB-KW"/>
</dbReference>
<dbReference type="GO" id="GO:0019253">
    <property type="term" value="P:reductive pentose-phosphate cycle"/>
    <property type="evidence" value="ECO:0007669"/>
    <property type="project" value="UniProtKB-KW"/>
</dbReference>
<dbReference type="CDD" id="cd08212">
    <property type="entry name" value="RuBisCO_large_I"/>
    <property type="match status" value="1"/>
</dbReference>
<dbReference type="FunFam" id="3.20.20.110:FF:000001">
    <property type="entry name" value="Ribulose bisphosphate carboxylase large chain"/>
    <property type="match status" value="1"/>
</dbReference>
<dbReference type="FunFam" id="3.30.70.150:FF:000001">
    <property type="entry name" value="Ribulose bisphosphate carboxylase large chain"/>
    <property type="match status" value="1"/>
</dbReference>
<dbReference type="Gene3D" id="3.20.20.110">
    <property type="entry name" value="Ribulose bisphosphate carboxylase, large subunit, C-terminal domain"/>
    <property type="match status" value="1"/>
</dbReference>
<dbReference type="Gene3D" id="3.30.70.150">
    <property type="entry name" value="RuBisCO large subunit, N-terminal domain"/>
    <property type="match status" value="1"/>
</dbReference>
<dbReference type="HAMAP" id="MF_01338">
    <property type="entry name" value="RuBisCO_L_type1"/>
    <property type="match status" value="1"/>
</dbReference>
<dbReference type="InterPro" id="IPR033966">
    <property type="entry name" value="RuBisCO"/>
</dbReference>
<dbReference type="InterPro" id="IPR020878">
    <property type="entry name" value="RuBisCo_large_chain_AS"/>
</dbReference>
<dbReference type="InterPro" id="IPR000685">
    <property type="entry name" value="RuBisCO_lsu_C"/>
</dbReference>
<dbReference type="InterPro" id="IPR036376">
    <property type="entry name" value="RuBisCO_lsu_C_sf"/>
</dbReference>
<dbReference type="InterPro" id="IPR017443">
    <property type="entry name" value="RuBisCO_lsu_fd_N"/>
</dbReference>
<dbReference type="InterPro" id="IPR036422">
    <property type="entry name" value="RuBisCO_lsu_N_sf"/>
</dbReference>
<dbReference type="InterPro" id="IPR020888">
    <property type="entry name" value="RuBisCO_lsuI"/>
</dbReference>
<dbReference type="NCBIfam" id="NF003252">
    <property type="entry name" value="PRK04208.1"/>
    <property type="match status" value="1"/>
</dbReference>
<dbReference type="PANTHER" id="PTHR42704">
    <property type="entry name" value="RIBULOSE BISPHOSPHATE CARBOXYLASE"/>
    <property type="match status" value="1"/>
</dbReference>
<dbReference type="PANTHER" id="PTHR42704:SF15">
    <property type="entry name" value="RIBULOSE BISPHOSPHATE CARBOXYLASE LARGE CHAIN"/>
    <property type="match status" value="1"/>
</dbReference>
<dbReference type="Pfam" id="PF00016">
    <property type="entry name" value="RuBisCO_large"/>
    <property type="match status" value="1"/>
</dbReference>
<dbReference type="Pfam" id="PF02788">
    <property type="entry name" value="RuBisCO_large_N"/>
    <property type="match status" value="1"/>
</dbReference>
<dbReference type="SFLD" id="SFLDG01052">
    <property type="entry name" value="RuBisCO"/>
    <property type="match status" value="1"/>
</dbReference>
<dbReference type="SFLD" id="SFLDS00014">
    <property type="entry name" value="RuBisCO"/>
    <property type="match status" value="1"/>
</dbReference>
<dbReference type="SFLD" id="SFLDG00301">
    <property type="entry name" value="RuBisCO-like_proteins"/>
    <property type="match status" value="1"/>
</dbReference>
<dbReference type="SUPFAM" id="SSF51649">
    <property type="entry name" value="RuBisCo, C-terminal domain"/>
    <property type="match status" value="1"/>
</dbReference>
<dbReference type="SUPFAM" id="SSF54966">
    <property type="entry name" value="RuBisCO, large subunit, small (N-terminal) domain"/>
    <property type="match status" value="1"/>
</dbReference>
<dbReference type="PROSITE" id="PS00157">
    <property type="entry name" value="RUBISCO_LARGE"/>
    <property type="match status" value="1"/>
</dbReference>